<sequence length="217" mass="23360">MNQTLLSDFGTPVERVERAIDALRNGRGVMVLDDESRENEGDMVFAAEAMTLEQMALTIRHGSGIVCLCITDERRQQLDLPMMVTHNSSQFQTAFTVTIEAAEGVTTGVSAADRLTTIRKAIADNAKPADLNRPGHVFPLRGQPGGVLSRRGHTEASIDLATLAGYKPAGVLCELTNDDGSMAHAPEVIAFAKLHDMPVVTIDDLAAYLQSRAKKAS</sequence>
<organism>
    <name type="scientific">Yersinia pestis</name>
    <dbReference type="NCBI Taxonomy" id="632"/>
    <lineage>
        <taxon>Bacteria</taxon>
        <taxon>Pseudomonadati</taxon>
        <taxon>Pseudomonadota</taxon>
        <taxon>Gammaproteobacteria</taxon>
        <taxon>Enterobacterales</taxon>
        <taxon>Yersiniaceae</taxon>
        <taxon>Yersinia</taxon>
    </lineage>
</organism>
<comment type="function">
    <text evidence="1">Catalyzes the conversion of D-ribulose 5-phosphate to formate and 3,4-dihydroxy-2-butanone 4-phosphate.</text>
</comment>
<comment type="catalytic activity">
    <reaction evidence="1">
        <text>D-ribulose 5-phosphate = (2S)-2-hydroxy-3-oxobutyl phosphate + formate + H(+)</text>
        <dbReference type="Rhea" id="RHEA:18457"/>
        <dbReference type="ChEBI" id="CHEBI:15378"/>
        <dbReference type="ChEBI" id="CHEBI:15740"/>
        <dbReference type="ChEBI" id="CHEBI:58121"/>
        <dbReference type="ChEBI" id="CHEBI:58830"/>
        <dbReference type="EC" id="4.1.99.12"/>
    </reaction>
</comment>
<comment type="cofactor">
    <cofactor evidence="1">
        <name>Mg(2+)</name>
        <dbReference type="ChEBI" id="CHEBI:18420"/>
    </cofactor>
    <cofactor evidence="1">
        <name>Mn(2+)</name>
        <dbReference type="ChEBI" id="CHEBI:29035"/>
    </cofactor>
    <text evidence="1">Binds 2 divalent metal cations per subunit. Magnesium or manganese.</text>
</comment>
<comment type="pathway">
    <text evidence="1">Cofactor biosynthesis; riboflavin biosynthesis; 2-hydroxy-3-oxobutyl phosphate from D-ribulose 5-phosphate: step 1/1.</text>
</comment>
<comment type="subunit">
    <text evidence="1">Homodimer.</text>
</comment>
<comment type="similarity">
    <text evidence="1">Belongs to the DHBP synthase family.</text>
</comment>
<proteinExistence type="evidence at protein level"/>
<reference key="1">
    <citation type="journal article" date="2001" name="Nature">
        <title>Genome sequence of Yersinia pestis, the causative agent of plague.</title>
        <authorList>
            <person name="Parkhill J."/>
            <person name="Wren B.W."/>
            <person name="Thomson N.R."/>
            <person name="Titball R.W."/>
            <person name="Holden M.T.G."/>
            <person name="Prentice M.B."/>
            <person name="Sebaihia M."/>
            <person name="James K.D."/>
            <person name="Churcher C.M."/>
            <person name="Mungall K.L."/>
            <person name="Baker S."/>
            <person name="Basham D."/>
            <person name="Bentley S.D."/>
            <person name="Brooks K."/>
            <person name="Cerdeno-Tarraga A.-M."/>
            <person name="Chillingworth T."/>
            <person name="Cronin A."/>
            <person name="Davies R.M."/>
            <person name="Davis P."/>
            <person name="Dougan G."/>
            <person name="Feltwell T."/>
            <person name="Hamlin N."/>
            <person name="Holroyd S."/>
            <person name="Jagels K."/>
            <person name="Karlyshev A.V."/>
            <person name="Leather S."/>
            <person name="Moule S."/>
            <person name="Oyston P.C.F."/>
            <person name="Quail M.A."/>
            <person name="Rutherford K.M."/>
            <person name="Simmonds M."/>
            <person name="Skelton J."/>
            <person name="Stevens K."/>
            <person name="Whitehead S."/>
            <person name="Barrell B.G."/>
        </authorList>
    </citation>
    <scope>NUCLEOTIDE SEQUENCE [LARGE SCALE GENOMIC DNA]</scope>
    <source>
        <strain>CO-92 / Biovar Orientalis</strain>
    </source>
</reference>
<reference key="2">
    <citation type="journal article" date="2002" name="J. Bacteriol.">
        <title>Genome sequence of Yersinia pestis KIM.</title>
        <authorList>
            <person name="Deng W."/>
            <person name="Burland V."/>
            <person name="Plunkett G. III"/>
            <person name="Boutin A."/>
            <person name="Mayhew G.F."/>
            <person name="Liss P."/>
            <person name="Perna N.T."/>
            <person name="Rose D.J."/>
            <person name="Mau B."/>
            <person name="Zhou S."/>
            <person name="Schwartz D.C."/>
            <person name="Fetherston J.D."/>
            <person name="Lindler L.E."/>
            <person name="Brubaker R.R."/>
            <person name="Plano G.V."/>
            <person name="Straley S.C."/>
            <person name="McDonough K.A."/>
            <person name="Nilles M.L."/>
            <person name="Matson J.S."/>
            <person name="Blattner F.R."/>
            <person name="Perry R.D."/>
        </authorList>
    </citation>
    <scope>NUCLEOTIDE SEQUENCE [LARGE SCALE GENOMIC DNA]</scope>
    <source>
        <strain>KIM10+ / Biovar Mediaevalis</strain>
    </source>
</reference>
<reference key="3">
    <citation type="journal article" date="2004" name="DNA Res.">
        <title>Complete genome sequence of Yersinia pestis strain 91001, an isolate avirulent to humans.</title>
        <authorList>
            <person name="Song Y."/>
            <person name="Tong Z."/>
            <person name="Wang J."/>
            <person name="Wang L."/>
            <person name="Guo Z."/>
            <person name="Han Y."/>
            <person name="Zhang J."/>
            <person name="Pei D."/>
            <person name="Zhou D."/>
            <person name="Qin H."/>
            <person name="Pang X."/>
            <person name="Han Y."/>
            <person name="Zhai J."/>
            <person name="Li M."/>
            <person name="Cui B."/>
            <person name="Qi Z."/>
            <person name="Jin L."/>
            <person name="Dai R."/>
            <person name="Chen F."/>
            <person name="Li S."/>
            <person name="Ye C."/>
            <person name="Du Z."/>
            <person name="Lin W."/>
            <person name="Wang J."/>
            <person name="Yu J."/>
            <person name="Yang H."/>
            <person name="Wang J."/>
            <person name="Huang P."/>
            <person name="Yang R."/>
        </authorList>
    </citation>
    <scope>NUCLEOTIDE SEQUENCE [LARGE SCALE GENOMIC DNA]</scope>
    <source>
        <strain>91001 / Biovar Mediaevalis</strain>
    </source>
</reference>
<feature type="chain" id="PRO_0000151820" description="3,4-dihydroxy-2-butanone 4-phosphate synthase">
    <location>
        <begin position="1"/>
        <end position="217"/>
    </location>
</feature>
<feature type="binding site" evidence="1">
    <location>
        <begin position="37"/>
        <end position="38"/>
    </location>
    <ligand>
        <name>D-ribulose 5-phosphate</name>
        <dbReference type="ChEBI" id="CHEBI:58121"/>
    </ligand>
</feature>
<feature type="binding site" evidence="1">
    <location>
        <position position="38"/>
    </location>
    <ligand>
        <name>Mg(2+)</name>
        <dbReference type="ChEBI" id="CHEBI:18420"/>
        <label>1</label>
    </ligand>
</feature>
<feature type="binding site" evidence="1">
    <location>
        <position position="38"/>
    </location>
    <ligand>
        <name>Mg(2+)</name>
        <dbReference type="ChEBI" id="CHEBI:18420"/>
        <label>2</label>
    </ligand>
</feature>
<feature type="binding site" evidence="1">
    <location>
        <position position="42"/>
    </location>
    <ligand>
        <name>D-ribulose 5-phosphate</name>
        <dbReference type="ChEBI" id="CHEBI:58121"/>
    </ligand>
</feature>
<feature type="binding site" evidence="1">
    <location>
        <begin position="150"/>
        <end position="154"/>
    </location>
    <ligand>
        <name>D-ribulose 5-phosphate</name>
        <dbReference type="ChEBI" id="CHEBI:58121"/>
    </ligand>
</feature>
<feature type="binding site" evidence="1">
    <location>
        <position position="153"/>
    </location>
    <ligand>
        <name>Mg(2+)</name>
        <dbReference type="ChEBI" id="CHEBI:18420"/>
        <label>2</label>
    </ligand>
</feature>
<feature type="binding site" evidence="1">
    <location>
        <position position="174"/>
    </location>
    <ligand>
        <name>D-ribulose 5-phosphate</name>
        <dbReference type="ChEBI" id="CHEBI:58121"/>
    </ligand>
</feature>
<feature type="site" description="Essential for catalytic activity" evidence="1">
    <location>
        <position position="136"/>
    </location>
</feature>
<feature type="site" description="Essential for catalytic activity" evidence="1">
    <location>
        <position position="174"/>
    </location>
</feature>
<feature type="helix" evidence="2">
    <location>
        <begin position="7"/>
        <end position="9"/>
    </location>
</feature>
<feature type="helix" evidence="2">
    <location>
        <begin position="12"/>
        <end position="24"/>
    </location>
</feature>
<feature type="strand" evidence="2">
    <location>
        <begin position="29"/>
        <end position="32"/>
    </location>
</feature>
<feature type="strand" evidence="2">
    <location>
        <begin position="35"/>
        <end position="38"/>
    </location>
</feature>
<feature type="strand" evidence="2">
    <location>
        <begin position="41"/>
        <end position="46"/>
    </location>
</feature>
<feature type="helix" evidence="2">
    <location>
        <begin position="47"/>
        <end position="49"/>
    </location>
</feature>
<feature type="helix" evidence="2">
    <location>
        <begin position="52"/>
        <end position="61"/>
    </location>
</feature>
<feature type="strand" evidence="2">
    <location>
        <begin position="67"/>
        <end position="70"/>
    </location>
</feature>
<feature type="helix" evidence="2">
    <location>
        <begin position="72"/>
        <end position="77"/>
    </location>
</feature>
<feature type="strand" evidence="2">
    <location>
        <begin position="99"/>
        <end position="104"/>
    </location>
</feature>
<feature type="strand" evidence="2">
    <location>
        <begin position="106"/>
        <end position="108"/>
    </location>
</feature>
<feature type="helix" evidence="2">
    <location>
        <begin position="111"/>
        <end position="122"/>
    </location>
</feature>
<feature type="helix" evidence="2">
    <location>
        <begin position="128"/>
        <end position="130"/>
    </location>
</feature>
<feature type="strand" evidence="2">
    <location>
        <begin position="131"/>
        <end position="141"/>
    </location>
</feature>
<feature type="helix" evidence="2">
    <location>
        <begin position="146"/>
        <end position="148"/>
    </location>
</feature>
<feature type="helix" evidence="2">
    <location>
        <begin position="153"/>
        <end position="163"/>
    </location>
</feature>
<feature type="strand" evidence="2">
    <location>
        <begin position="168"/>
        <end position="176"/>
    </location>
</feature>
<feature type="helix" evidence="2">
    <location>
        <begin position="185"/>
        <end position="195"/>
    </location>
</feature>
<feature type="strand" evidence="2">
    <location>
        <begin position="199"/>
        <end position="201"/>
    </location>
</feature>
<feature type="helix" evidence="2">
    <location>
        <begin position="202"/>
        <end position="210"/>
    </location>
</feature>
<gene>
    <name evidence="1" type="primary">ribB</name>
    <name type="ordered locus">YPO0658</name>
    <name type="ordered locus">y3520</name>
    <name type="ordered locus">YP_2973</name>
</gene>
<name>RIBB_YERPE</name>
<accession>Q8ZI56</accession>
<accession>Q0WJ12</accession>
<evidence type="ECO:0000255" key="1">
    <source>
        <dbReference type="HAMAP-Rule" id="MF_00180"/>
    </source>
</evidence>
<evidence type="ECO:0007829" key="2">
    <source>
        <dbReference type="PDB" id="3H07"/>
    </source>
</evidence>
<keyword id="KW-0002">3D-structure</keyword>
<keyword id="KW-0456">Lyase</keyword>
<keyword id="KW-0460">Magnesium</keyword>
<keyword id="KW-0464">Manganese</keyword>
<keyword id="KW-0479">Metal-binding</keyword>
<keyword id="KW-1185">Reference proteome</keyword>
<keyword id="KW-0686">Riboflavin biosynthesis</keyword>
<protein>
    <recommendedName>
        <fullName evidence="1">3,4-dihydroxy-2-butanone 4-phosphate synthase</fullName>
        <shortName evidence="1">DHBP synthase</shortName>
        <ecNumber evidence="1">4.1.99.12</ecNumber>
    </recommendedName>
</protein>
<dbReference type="EC" id="4.1.99.12" evidence="1"/>
<dbReference type="EMBL" id="AL590842">
    <property type="protein sequence ID" value="CAL19335.1"/>
    <property type="molecule type" value="Genomic_DNA"/>
</dbReference>
<dbReference type="EMBL" id="AE009952">
    <property type="protein sequence ID" value="AAM87068.1"/>
    <property type="molecule type" value="Genomic_DNA"/>
</dbReference>
<dbReference type="EMBL" id="AE017042">
    <property type="protein sequence ID" value="AAS63152.1"/>
    <property type="molecule type" value="Genomic_DNA"/>
</dbReference>
<dbReference type="PIR" id="AE0081">
    <property type="entry name" value="AE0081"/>
</dbReference>
<dbReference type="RefSeq" id="WP_002212190.1">
    <property type="nucleotide sequence ID" value="NZ_WUCM01000022.1"/>
</dbReference>
<dbReference type="RefSeq" id="YP_002345726.1">
    <property type="nucleotide sequence ID" value="NC_003143.1"/>
</dbReference>
<dbReference type="PDB" id="3H07">
    <property type="method" value="X-ray"/>
    <property type="resolution" value="1.95 A"/>
    <property type="chains" value="A/B=1-217"/>
</dbReference>
<dbReference type="PDBsum" id="3H07"/>
<dbReference type="SMR" id="Q8ZI56"/>
<dbReference type="STRING" id="214092.YPO0658"/>
<dbReference type="PaxDb" id="214092-YPO0658"/>
<dbReference type="DNASU" id="1148467"/>
<dbReference type="EnsemblBacteria" id="AAS63152">
    <property type="protein sequence ID" value="AAS63152"/>
    <property type="gene ID" value="YP_2973"/>
</dbReference>
<dbReference type="GeneID" id="57973967"/>
<dbReference type="KEGG" id="ype:YPO0658"/>
<dbReference type="KEGG" id="ypk:y3520"/>
<dbReference type="KEGG" id="ypm:YP_2973"/>
<dbReference type="PATRIC" id="fig|214092.21.peg.917"/>
<dbReference type="eggNOG" id="COG0108">
    <property type="taxonomic scope" value="Bacteria"/>
</dbReference>
<dbReference type="HOGENOM" id="CLU_020273_3_0_6"/>
<dbReference type="OMA" id="DAGGLIC"/>
<dbReference type="OrthoDB" id="9793111at2"/>
<dbReference type="UniPathway" id="UPA00275">
    <property type="reaction ID" value="UER00399"/>
</dbReference>
<dbReference type="EvolutionaryTrace" id="Q8ZI56"/>
<dbReference type="Proteomes" id="UP000000815">
    <property type="component" value="Chromosome"/>
</dbReference>
<dbReference type="Proteomes" id="UP000001019">
    <property type="component" value="Chromosome"/>
</dbReference>
<dbReference type="Proteomes" id="UP000002490">
    <property type="component" value="Chromosome"/>
</dbReference>
<dbReference type="GO" id="GO:0005829">
    <property type="term" value="C:cytosol"/>
    <property type="evidence" value="ECO:0000318"/>
    <property type="project" value="GO_Central"/>
</dbReference>
<dbReference type="GO" id="GO:0008686">
    <property type="term" value="F:3,4-dihydroxy-2-butanone-4-phosphate synthase activity"/>
    <property type="evidence" value="ECO:0000318"/>
    <property type="project" value="GO_Central"/>
</dbReference>
<dbReference type="GO" id="GO:0000287">
    <property type="term" value="F:magnesium ion binding"/>
    <property type="evidence" value="ECO:0007669"/>
    <property type="project" value="UniProtKB-UniRule"/>
</dbReference>
<dbReference type="GO" id="GO:0030145">
    <property type="term" value="F:manganese ion binding"/>
    <property type="evidence" value="ECO:0007669"/>
    <property type="project" value="UniProtKB-UniRule"/>
</dbReference>
<dbReference type="GO" id="GO:0009231">
    <property type="term" value="P:riboflavin biosynthetic process"/>
    <property type="evidence" value="ECO:0000318"/>
    <property type="project" value="GO_Central"/>
</dbReference>
<dbReference type="FunFam" id="3.90.870.10:FF:000002">
    <property type="entry name" value="3,4-dihydroxy-2-butanone 4-phosphate synthase"/>
    <property type="match status" value="1"/>
</dbReference>
<dbReference type="Gene3D" id="3.90.870.10">
    <property type="entry name" value="DHBP synthase"/>
    <property type="match status" value="1"/>
</dbReference>
<dbReference type="HAMAP" id="MF_00180">
    <property type="entry name" value="RibB"/>
    <property type="match status" value="1"/>
</dbReference>
<dbReference type="InterPro" id="IPR017945">
    <property type="entry name" value="DHBP_synth_RibB-like_a/b_dom"/>
</dbReference>
<dbReference type="InterPro" id="IPR000422">
    <property type="entry name" value="DHBP_synthase_RibB"/>
</dbReference>
<dbReference type="NCBIfam" id="TIGR00506">
    <property type="entry name" value="ribB"/>
    <property type="match status" value="1"/>
</dbReference>
<dbReference type="PANTHER" id="PTHR21327:SF38">
    <property type="entry name" value="3,4-DIHYDROXY-2-BUTANONE 4-PHOSPHATE SYNTHASE"/>
    <property type="match status" value="1"/>
</dbReference>
<dbReference type="PANTHER" id="PTHR21327">
    <property type="entry name" value="GTP CYCLOHYDROLASE II-RELATED"/>
    <property type="match status" value="1"/>
</dbReference>
<dbReference type="Pfam" id="PF00926">
    <property type="entry name" value="DHBP_synthase"/>
    <property type="match status" value="1"/>
</dbReference>
<dbReference type="SUPFAM" id="SSF55821">
    <property type="entry name" value="YrdC/RibB"/>
    <property type="match status" value="1"/>
</dbReference>